<feature type="chain" id="PRO_0000112839" description="Auxin-responsive protein IAA8">
    <location>
        <begin position="1"/>
        <end position="321"/>
    </location>
</feature>
<feature type="domain" description="PB1" evidence="2">
    <location>
        <begin position="199"/>
        <end position="301"/>
    </location>
</feature>
<feature type="short sequence motif" description="EAR-like (transcriptional repression)">
    <location>
        <begin position="54"/>
        <end position="58"/>
    </location>
</feature>
<sequence>MSYRLLSVDKDELVTSPCLKERNYLGLSDCSSVDSSTIPNVVGKSNLNFKATELRLGLPESQSPERETDFGLLSPRTPDEKLLFPLLPSKDNGSATTGHKNVVSGNKRGFADTWDEFSGVKGSVRPGGGINMMLSPKVKDVSKSIQEERSHAKGGLNNAPAAKAQVVGWPPIRSYRKNTMASSTSKNTDEVDGKPGLGVLFVKVSMDGAPYLRKVDLRTYTSYQQLSSALEKMFSCFTLGQCGLHGAQGRERMSEIKLKDLLHGSEFVLTYEDKDGDWMLVGDVPWEIFTETCQKLKIMKGSDSIGLAPGAVEKSKNKERV</sequence>
<protein>
    <recommendedName>
        <fullName>Auxin-responsive protein IAA8</fullName>
    </recommendedName>
    <alternativeName>
        <fullName>Indoleacetic acid-induced protein 8</fullName>
    </alternativeName>
</protein>
<dbReference type="EMBL" id="U18410">
    <property type="protein sequence ID" value="AAC49049.1"/>
    <property type="molecule type" value="mRNA"/>
</dbReference>
<dbReference type="EMBL" id="AC006340">
    <property type="protein sequence ID" value="AAD15575.1"/>
    <property type="molecule type" value="Genomic_DNA"/>
</dbReference>
<dbReference type="EMBL" id="CP002685">
    <property type="protein sequence ID" value="AEC07336.1"/>
    <property type="molecule type" value="Genomic_DNA"/>
</dbReference>
<dbReference type="EMBL" id="CP002685">
    <property type="protein sequence ID" value="AEC07338.1"/>
    <property type="molecule type" value="Genomic_DNA"/>
</dbReference>
<dbReference type="EMBL" id="AF334714">
    <property type="protein sequence ID" value="AAG50092.1"/>
    <property type="molecule type" value="mRNA"/>
</dbReference>
<dbReference type="EMBL" id="AY059905">
    <property type="protein sequence ID" value="AAL24387.1"/>
    <property type="molecule type" value="mRNA"/>
</dbReference>
<dbReference type="EMBL" id="AY070399">
    <property type="protein sequence ID" value="AAL49895.1"/>
    <property type="molecule type" value="mRNA"/>
</dbReference>
<dbReference type="EMBL" id="AY096452">
    <property type="protein sequence ID" value="AAM20092.1"/>
    <property type="molecule type" value="mRNA"/>
</dbReference>
<dbReference type="EMBL" id="AY114671">
    <property type="protein sequence ID" value="AAM47990.1"/>
    <property type="molecule type" value="mRNA"/>
</dbReference>
<dbReference type="EMBL" id="AY087635">
    <property type="protein sequence ID" value="AAM65174.1"/>
    <property type="molecule type" value="mRNA"/>
</dbReference>
<dbReference type="PIR" id="S58495">
    <property type="entry name" value="S58495"/>
</dbReference>
<dbReference type="RefSeq" id="NP_001077943.1">
    <molecule id="Q38826-1"/>
    <property type="nucleotide sequence ID" value="NM_001084474.1"/>
</dbReference>
<dbReference type="RefSeq" id="NP_179852.1">
    <molecule id="Q38826-1"/>
    <property type="nucleotide sequence ID" value="NM_127832.3"/>
</dbReference>
<dbReference type="SMR" id="Q38826"/>
<dbReference type="BioGRID" id="2151">
    <property type="interactions" value="55"/>
</dbReference>
<dbReference type="ELM" id="Q38826"/>
<dbReference type="FunCoup" id="Q38826">
    <property type="interactions" value="397"/>
</dbReference>
<dbReference type="IntAct" id="Q38826">
    <property type="interactions" value="42"/>
</dbReference>
<dbReference type="STRING" id="3702.Q38826"/>
<dbReference type="iPTMnet" id="Q38826"/>
<dbReference type="PaxDb" id="3702-AT2G22670.4"/>
<dbReference type="ProteomicsDB" id="232160">
    <molecule id="Q38826-1"/>
</dbReference>
<dbReference type="EnsemblPlants" id="AT2G22670.1">
    <molecule id="Q38826-1"/>
    <property type="protein sequence ID" value="AT2G22670.1"/>
    <property type="gene ID" value="AT2G22670"/>
</dbReference>
<dbReference type="EnsemblPlants" id="AT2G22670.3">
    <molecule id="Q38826-1"/>
    <property type="protein sequence ID" value="AT2G22670.3"/>
    <property type="gene ID" value="AT2G22670"/>
</dbReference>
<dbReference type="GeneID" id="816798"/>
<dbReference type="Gramene" id="AT2G22670.1">
    <molecule id="Q38826-1"/>
    <property type="protein sequence ID" value="AT2G22670.1"/>
    <property type="gene ID" value="AT2G22670"/>
</dbReference>
<dbReference type="Gramene" id="AT2G22670.3">
    <molecule id="Q38826-1"/>
    <property type="protein sequence ID" value="AT2G22670.3"/>
    <property type="gene ID" value="AT2G22670"/>
</dbReference>
<dbReference type="KEGG" id="ath:AT2G22670"/>
<dbReference type="Araport" id="AT2G22670"/>
<dbReference type="TAIR" id="AT2G22670">
    <property type="gene designation" value="IAA8"/>
</dbReference>
<dbReference type="eggNOG" id="ENOG502SMVB">
    <property type="taxonomic scope" value="Eukaryota"/>
</dbReference>
<dbReference type="HOGENOM" id="CLU_049393_1_2_1"/>
<dbReference type="InParanoid" id="Q38826"/>
<dbReference type="PhylomeDB" id="Q38826"/>
<dbReference type="PRO" id="PR:Q38826"/>
<dbReference type="Proteomes" id="UP000006548">
    <property type="component" value="Chromosome 2"/>
</dbReference>
<dbReference type="ExpressionAtlas" id="Q38826">
    <property type="expression patterns" value="baseline and differential"/>
</dbReference>
<dbReference type="GO" id="GO:0005634">
    <property type="term" value="C:nucleus"/>
    <property type="evidence" value="ECO:0000314"/>
    <property type="project" value="CACAO"/>
</dbReference>
<dbReference type="GO" id="GO:0009734">
    <property type="term" value="P:auxin-activated signaling pathway"/>
    <property type="evidence" value="ECO:0007669"/>
    <property type="project" value="UniProtKB-KW"/>
</dbReference>
<dbReference type="GO" id="GO:1901332">
    <property type="term" value="P:negative regulation of lateral root development"/>
    <property type="evidence" value="ECO:0000315"/>
    <property type="project" value="CACAO"/>
</dbReference>
<dbReference type="GO" id="GO:0006355">
    <property type="term" value="P:regulation of DNA-templated transcription"/>
    <property type="evidence" value="ECO:0007669"/>
    <property type="project" value="InterPro"/>
</dbReference>
<dbReference type="FunFam" id="3.10.20.90:FF:000078">
    <property type="entry name" value="Auxin-responsive protein"/>
    <property type="match status" value="1"/>
</dbReference>
<dbReference type="Gene3D" id="3.10.20.90">
    <property type="entry name" value="Phosphatidylinositol 3-kinase Catalytic Subunit, Chain A, domain 1"/>
    <property type="match status" value="1"/>
</dbReference>
<dbReference type="InterPro" id="IPR033389">
    <property type="entry name" value="AUX/IAA_dom"/>
</dbReference>
<dbReference type="InterPro" id="IPR003311">
    <property type="entry name" value="AUX_IAA"/>
</dbReference>
<dbReference type="InterPro" id="IPR053793">
    <property type="entry name" value="PB1-like"/>
</dbReference>
<dbReference type="PANTHER" id="PTHR31734">
    <property type="entry name" value="AUXIN-RESPONSIVE PROTEIN IAA17"/>
    <property type="match status" value="1"/>
</dbReference>
<dbReference type="PANTHER" id="PTHR31734:SF138">
    <property type="entry name" value="AUXIN-RESPONSIVE PROTEIN IAA8"/>
    <property type="match status" value="1"/>
</dbReference>
<dbReference type="Pfam" id="PF02309">
    <property type="entry name" value="AUX_IAA"/>
    <property type="match status" value="1"/>
</dbReference>
<dbReference type="SUPFAM" id="SSF54277">
    <property type="entry name" value="CAD &amp; PB1 domains"/>
    <property type="match status" value="1"/>
</dbReference>
<dbReference type="PROSITE" id="PS51745">
    <property type="entry name" value="PB1"/>
    <property type="match status" value="1"/>
</dbReference>
<evidence type="ECO:0000250" key="1"/>
<evidence type="ECO:0000255" key="2">
    <source>
        <dbReference type="PROSITE-ProRule" id="PRU01081"/>
    </source>
</evidence>
<evidence type="ECO:0000269" key="3">
    <source>
    </source>
</evidence>
<evidence type="ECO:0000269" key="4">
    <source>
    </source>
</evidence>
<evidence type="ECO:0000269" key="5">
    <source>
    </source>
</evidence>
<evidence type="ECO:0000305" key="6"/>
<organism>
    <name type="scientific">Arabidopsis thaliana</name>
    <name type="common">Mouse-ear cress</name>
    <dbReference type="NCBI Taxonomy" id="3702"/>
    <lineage>
        <taxon>Eukaryota</taxon>
        <taxon>Viridiplantae</taxon>
        <taxon>Streptophyta</taxon>
        <taxon>Embryophyta</taxon>
        <taxon>Tracheophyta</taxon>
        <taxon>Spermatophyta</taxon>
        <taxon>Magnoliopsida</taxon>
        <taxon>eudicotyledons</taxon>
        <taxon>Gunneridae</taxon>
        <taxon>Pentapetalae</taxon>
        <taxon>rosids</taxon>
        <taxon>malvids</taxon>
        <taxon>Brassicales</taxon>
        <taxon>Brassicaceae</taxon>
        <taxon>Camelineae</taxon>
        <taxon>Arabidopsis</taxon>
    </lineage>
</organism>
<proteinExistence type="evidence at protein level"/>
<comment type="function">
    <text evidence="3">Aux/IAA proteins are short-lived transcriptional factors that function as repressors of early auxin response genes at low auxin concentrations. Repression is thought to result from the interaction with auxin response factors (ARFs), proteins that bind to the auxin-responsive promoter element (AuxRE). Formation of heterodimers with ARF proteins may alter their ability to modulate early auxin response genes expression.</text>
</comment>
<comment type="subunit">
    <text evidence="1 4">Homodimers and heterodimers (By similarity). Interacts with TPL.</text>
</comment>
<comment type="interaction">
    <interactant intactId="EBI-632200">
        <id>Q38826</id>
    </interactant>
    <interactant intactId="EBI-529887">
        <id>Q8RYC8</id>
        <label>ARF19</label>
    </interactant>
    <organismsDiffer>false</organismsDiffer>
    <experiments>4</experiments>
</comment>
<comment type="interaction">
    <interactant intactId="EBI-632200">
        <id>Q38826</id>
    </interactant>
    <interactant intactId="EBI-15192195">
        <id>B9DHT4</id>
        <label>ARIA</label>
    </interactant>
    <organismsDiffer>false</organismsDiffer>
    <experiments>3</experiments>
</comment>
<comment type="interaction">
    <interactant intactId="EBI-632200">
        <id>Q38826</id>
    </interactant>
    <interactant intactId="EBI-630505">
        <id>P49677</id>
        <label>IAA1</label>
    </interactant>
    <organismsDiffer>false</organismsDiffer>
    <experiments>7</experiments>
</comment>
<comment type="interaction">
    <interactant intactId="EBI-632200">
        <id>Q38826</id>
    </interactant>
    <interactant intactId="EBI-3946434">
        <id>Q38828</id>
        <label>IAA10</label>
    </interactant>
    <organismsDiffer>false</organismsDiffer>
    <experiments>7</experiments>
</comment>
<comment type="interaction">
    <interactant intactId="EBI-632200">
        <id>Q38826</id>
    </interactant>
    <interactant intactId="EBI-2367923">
        <id>Q38829</id>
        <label>IAA11</label>
    </interactant>
    <organismsDiffer>false</organismsDiffer>
    <experiments>6</experiments>
</comment>
<comment type="interaction">
    <interactant intactId="EBI-632200">
        <id>Q38826</id>
    </interactant>
    <interactant intactId="EBI-617608">
        <id>Q38830</id>
        <label>IAA12</label>
    </interactant>
    <organismsDiffer>false</organismsDiffer>
    <experiments>7</experiments>
</comment>
<comment type="interaction">
    <interactant intactId="EBI-632200">
        <id>Q38826</id>
    </interactant>
    <interactant intactId="EBI-1554143">
        <id>Q38831</id>
        <label>IAA13</label>
    </interactant>
    <organismsDiffer>false</organismsDiffer>
    <experiments>6</experiments>
</comment>
<comment type="interaction">
    <interactant intactId="EBI-632200">
        <id>Q38826</id>
    </interactant>
    <interactant intactId="EBI-25524519">
        <id>A0A2H1ZEF6</id>
        <label>IAA15</label>
    </interactant>
    <organismsDiffer>false</organismsDiffer>
    <experiments>3</experiments>
</comment>
<comment type="interaction">
    <interactant intactId="EBI-632200">
        <id>Q38826</id>
    </interactant>
    <interactant intactId="EBI-632231">
        <id>O24407</id>
        <label>IAA16</label>
    </interactant>
    <organismsDiffer>false</organismsDiffer>
    <experiments>7</experiments>
</comment>
<comment type="interaction">
    <interactant intactId="EBI-632200">
        <id>Q38826</id>
    </interactant>
    <interactant intactId="EBI-632243">
        <id>P93830</id>
        <label>IAA17</label>
    </interactant>
    <organismsDiffer>false</organismsDiffer>
    <experiments>8</experiments>
</comment>
<comment type="interaction">
    <interactant intactId="EBI-632200">
        <id>Q38826</id>
    </interactant>
    <interactant intactId="EBI-2295525">
        <id>O24408</id>
        <label>IAA18</label>
    </interactant>
    <organismsDiffer>false</organismsDiffer>
    <experiments>6</experiments>
</comment>
<comment type="interaction">
    <interactant intactId="EBI-632200">
        <id>Q38826</id>
    </interactant>
    <interactant intactId="EBI-632257">
        <id>O24409</id>
        <label>IAA19</label>
    </interactant>
    <organismsDiffer>false</organismsDiffer>
    <experiments>7</experiments>
</comment>
<comment type="interaction">
    <interactant intactId="EBI-632200">
        <id>Q38826</id>
    </interactant>
    <interactant intactId="EBI-632343">
        <id>P49678</id>
        <label>IAA2</label>
    </interactant>
    <organismsDiffer>false</organismsDiffer>
    <experiments>7</experiments>
</comment>
<comment type="interaction">
    <interactant intactId="EBI-632200">
        <id>Q38826</id>
    </interactant>
    <interactant intactId="EBI-632272">
        <id>O24410</id>
        <label>IAA20</label>
    </interactant>
    <organismsDiffer>false</organismsDiffer>
    <experiments>4</experiments>
</comment>
<comment type="interaction">
    <interactant intactId="EBI-632200">
        <id>Q38826</id>
    </interactant>
    <interactant intactId="EBI-3947418">
        <id>Q8LAL2</id>
        <label>IAA26</label>
    </interactant>
    <organismsDiffer>false</organismsDiffer>
    <experiments>5</experiments>
</comment>
<comment type="interaction">
    <interactant intactId="EBI-632200">
        <id>Q38826</id>
    </interactant>
    <interactant intactId="EBI-3946677">
        <id>Q9ZSY8</id>
        <label>IAA27</label>
    </interactant>
    <organismsDiffer>false</organismsDiffer>
    <experiments>6</experiments>
</comment>
<comment type="interaction">
    <interactant intactId="EBI-632200">
        <id>Q38826</id>
    </interactant>
    <interactant intactId="EBI-3133404">
        <id>Q9XFM0</id>
        <label>IAA28</label>
    </interactant>
    <organismsDiffer>false</organismsDiffer>
    <experiments>8</experiments>
</comment>
<comment type="interaction">
    <interactant intactId="EBI-632200">
        <id>Q38826</id>
    </interactant>
    <interactant intactId="EBI-307174">
        <id>Q38822</id>
        <label>IAA3</label>
    </interactant>
    <organismsDiffer>false</organismsDiffer>
    <experiments>7</experiments>
</comment>
<comment type="interaction">
    <interactant intactId="EBI-632200">
        <id>Q38826</id>
    </interactant>
    <interactant intactId="EBI-3946459">
        <id>Q9C5X0</id>
        <label>IAA34</label>
    </interactant>
    <organismsDiffer>false</organismsDiffer>
    <experiments>6</experiments>
</comment>
<comment type="interaction">
    <interactant intactId="EBI-632200">
        <id>Q38826</id>
    </interactant>
    <interactant intactId="EBI-632187">
        <id>P33077</id>
        <label>IAA4</label>
    </interactant>
    <organismsDiffer>false</organismsDiffer>
    <experiments>7</experiments>
</comment>
<comment type="interaction">
    <interactant intactId="EBI-632200">
        <id>Q38826</id>
    </interactant>
    <interactant intactId="EBI-3946487">
        <id>P33078</id>
        <label>IAA5</label>
    </interactant>
    <organismsDiffer>false</organismsDiffer>
    <experiments>7</experiments>
</comment>
<comment type="interaction">
    <interactant intactId="EBI-632200">
        <id>Q38826</id>
    </interactant>
    <interactant intactId="EBI-1554124">
        <id>Q38824</id>
        <label>IAA6</label>
    </interactant>
    <organismsDiffer>false</organismsDiffer>
    <experiments>5</experiments>
</comment>
<comment type="interaction">
    <interactant intactId="EBI-632200">
        <id>Q38826</id>
    </interactant>
    <interactant intactId="EBI-632216">
        <id>Q38827</id>
        <label>IAA9</label>
    </interactant>
    <organismsDiffer>false</organismsDiffer>
    <experiments>4</experiments>
</comment>
<comment type="interaction">
    <interactant intactId="EBI-632200">
        <id>Q38826</id>
    </interactant>
    <interactant intactId="EBI-963647">
        <id>Q9C8Y3</id>
        <label>RGL1</label>
    </interactant>
    <organismsDiffer>false</organismsDiffer>
    <experiments>3</experiments>
</comment>
<comment type="interaction">
    <interactant intactId="EBI-632200">
        <id>Q38826</id>
    </interactant>
    <interactant intactId="EBI-4426144">
        <id>Q9C9L2</id>
        <label>TCP15</label>
    </interactant>
    <organismsDiffer>false</organismsDiffer>
    <experiments>3</experiments>
</comment>
<comment type="interaction">
    <interactant intactId="EBI-632200">
        <id>Q38826</id>
    </interactant>
    <interactant intactId="EBI-25522447">
        <id>Q9MAH8</id>
        <label>TCP3</label>
    </interactant>
    <organismsDiffer>false</organismsDiffer>
    <experiments>3</experiments>
</comment>
<comment type="subcellular location">
    <subcellularLocation>
        <location evidence="1">Nucleus</location>
    </subcellularLocation>
</comment>
<comment type="alternative products">
    <event type="alternative splicing"/>
    <isoform>
        <id>Q38826-1</id>
        <name>1</name>
        <sequence type="displayed"/>
    </isoform>
    <text>A number of isoforms are produced. According to EST sequences.</text>
</comment>
<comment type="tissue specificity">
    <text evidence="5">Highly expressed in the whole plant.</text>
</comment>
<comment type="induction">
    <text evidence="5">By auxin.</text>
</comment>
<comment type="domain">
    <text>The N-terminal half of the protein contains two conserved domains I and II. Domain I includes a slightly degenerated ERF-associated amphiphilic repression (EAR) motif which seems to be involved in the activity of transcriptional repression. Domain II is required for the correct degradation of the protein through the SCF-mediated ubiquitin-proteasome pathway. Interactions between Aux/IAA proteins and auxin response factors (ARFs) occur through their C-terminal dimerization domains III and IV.</text>
</comment>
<comment type="similarity">
    <text evidence="6">Belongs to the Aux/IAA family.</text>
</comment>
<gene>
    <name type="primary">IAA8</name>
    <name type="ordered locus">At2g22670</name>
    <name type="ORF">T9I22.11</name>
</gene>
<accession>Q38826</accession>
<keyword id="KW-0025">Alternative splicing</keyword>
<keyword id="KW-0927">Auxin signaling pathway</keyword>
<keyword id="KW-0539">Nucleus</keyword>
<keyword id="KW-1185">Reference proteome</keyword>
<keyword id="KW-0678">Repressor</keyword>
<keyword id="KW-0804">Transcription</keyword>
<keyword id="KW-0805">Transcription regulation</keyword>
<reference key="1">
    <citation type="journal article" date="1995" name="J. Mol. Biol.">
        <title>The PS-IAA4/5-like family of early auxin-inducible mRNAs in Arabidopsis thaliana.</title>
        <authorList>
            <person name="Abel S."/>
            <person name="Nguyen M.D."/>
            <person name="Theologis A."/>
        </authorList>
    </citation>
    <scope>NUCLEOTIDE SEQUENCE [MRNA]</scope>
    <scope>TISSUE SPECIFICITY</scope>
    <scope>INDUCTION</scope>
    <source>
        <strain>cv. Columbia</strain>
    </source>
</reference>
<reference key="2">
    <citation type="journal article" date="1999" name="Nature">
        <title>Sequence and analysis of chromosome 2 of the plant Arabidopsis thaliana.</title>
        <authorList>
            <person name="Lin X."/>
            <person name="Kaul S."/>
            <person name="Rounsley S.D."/>
            <person name="Shea T.P."/>
            <person name="Benito M.-I."/>
            <person name="Town C.D."/>
            <person name="Fujii C.Y."/>
            <person name="Mason T.M."/>
            <person name="Bowman C.L."/>
            <person name="Barnstead M.E."/>
            <person name="Feldblyum T.V."/>
            <person name="Buell C.R."/>
            <person name="Ketchum K.A."/>
            <person name="Lee J.J."/>
            <person name="Ronning C.M."/>
            <person name="Koo H.L."/>
            <person name="Moffat K.S."/>
            <person name="Cronin L.A."/>
            <person name="Shen M."/>
            <person name="Pai G."/>
            <person name="Van Aken S."/>
            <person name="Umayam L."/>
            <person name="Tallon L.J."/>
            <person name="Gill J.E."/>
            <person name="Adams M.D."/>
            <person name="Carrera A.J."/>
            <person name="Creasy T.H."/>
            <person name="Goodman H.M."/>
            <person name="Somerville C.R."/>
            <person name="Copenhaver G.P."/>
            <person name="Preuss D."/>
            <person name="Nierman W.C."/>
            <person name="White O."/>
            <person name="Eisen J.A."/>
            <person name="Salzberg S.L."/>
            <person name="Fraser C.M."/>
            <person name="Venter J.C."/>
        </authorList>
    </citation>
    <scope>NUCLEOTIDE SEQUENCE [LARGE SCALE GENOMIC DNA]</scope>
    <source>
        <strain>cv. Columbia</strain>
    </source>
</reference>
<reference key="3">
    <citation type="journal article" date="2017" name="Plant J.">
        <title>Araport11: a complete reannotation of the Arabidopsis thaliana reference genome.</title>
        <authorList>
            <person name="Cheng C.Y."/>
            <person name="Krishnakumar V."/>
            <person name="Chan A.P."/>
            <person name="Thibaud-Nissen F."/>
            <person name="Schobel S."/>
            <person name="Town C.D."/>
        </authorList>
    </citation>
    <scope>GENOME REANNOTATION</scope>
    <source>
        <strain>cv. Columbia</strain>
    </source>
</reference>
<reference key="4">
    <citation type="journal article" date="2003" name="Science">
        <title>Empirical analysis of transcriptional activity in the Arabidopsis genome.</title>
        <authorList>
            <person name="Yamada K."/>
            <person name="Lim J."/>
            <person name="Dale J.M."/>
            <person name="Chen H."/>
            <person name="Shinn P."/>
            <person name="Palm C.J."/>
            <person name="Southwick A.M."/>
            <person name="Wu H.C."/>
            <person name="Kim C.J."/>
            <person name="Nguyen M."/>
            <person name="Pham P.K."/>
            <person name="Cheuk R.F."/>
            <person name="Karlin-Newmann G."/>
            <person name="Liu S.X."/>
            <person name="Lam B."/>
            <person name="Sakano H."/>
            <person name="Wu T."/>
            <person name="Yu G."/>
            <person name="Miranda M."/>
            <person name="Quach H.L."/>
            <person name="Tripp M."/>
            <person name="Chang C.H."/>
            <person name="Lee J.M."/>
            <person name="Toriumi M.J."/>
            <person name="Chan M.M."/>
            <person name="Tang C.C."/>
            <person name="Onodera C.S."/>
            <person name="Deng J.M."/>
            <person name="Akiyama K."/>
            <person name="Ansari Y."/>
            <person name="Arakawa T."/>
            <person name="Banh J."/>
            <person name="Banno F."/>
            <person name="Bowser L."/>
            <person name="Brooks S.Y."/>
            <person name="Carninci P."/>
            <person name="Chao Q."/>
            <person name="Choy N."/>
            <person name="Enju A."/>
            <person name="Goldsmith A.D."/>
            <person name="Gurjal M."/>
            <person name="Hansen N.F."/>
            <person name="Hayashizaki Y."/>
            <person name="Johnson-Hopson C."/>
            <person name="Hsuan V.W."/>
            <person name="Iida K."/>
            <person name="Karnes M."/>
            <person name="Khan S."/>
            <person name="Koesema E."/>
            <person name="Ishida J."/>
            <person name="Jiang P.X."/>
            <person name="Jones T."/>
            <person name="Kawai J."/>
            <person name="Kamiya A."/>
            <person name="Meyers C."/>
            <person name="Nakajima M."/>
            <person name="Narusaka M."/>
            <person name="Seki M."/>
            <person name="Sakurai T."/>
            <person name="Satou M."/>
            <person name="Tamse R."/>
            <person name="Vaysberg M."/>
            <person name="Wallender E.K."/>
            <person name="Wong C."/>
            <person name="Yamamura Y."/>
            <person name="Yuan S."/>
            <person name="Shinozaki K."/>
            <person name="Davis R.W."/>
            <person name="Theologis A."/>
            <person name="Ecker J.R."/>
        </authorList>
    </citation>
    <scope>NUCLEOTIDE SEQUENCE [LARGE SCALE MRNA]</scope>
    <source>
        <strain>cv. Columbia</strain>
    </source>
</reference>
<reference key="5">
    <citation type="submission" date="2002-03" db="EMBL/GenBank/DDBJ databases">
        <title>Full-length cDNA from Arabidopsis thaliana.</title>
        <authorList>
            <person name="Brover V.V."/>
            <person name="Troukhan M.E."/>
            <person name="Alexandrov N.A."/>
            <person name="Lu Y.-P."/>
            <person name="Flavell R.B."/>
            <person name="Feldmann K.A."/>
        </authorList>
    </citation>
    <scope>NUCLEOTIDE SEQUENCE [LARGE SCALE MRNA]</scope>
</reference>
<reference key="6">
    <citation type="journal article" date="2002" name="Plant Mol. Biol.">
        <title>Genetics of Aux/IAA and ARF action in plant growth and development.</title>
        <authorList>
            <person name="Liscum E."/>
            <person name="Reed J.W."/>
        </authorList>
    </citation>
    <scope>GENE FAMILY</scope>
    <scope>NOMENCLATURE</scope>
    <scope>FUNCTION</scope>
</reference>
<reference key="7">
    <citation type="journal article" date="2004" name="Plant Cell">
        <title>Aux/IAA proteins contain a potent transcriptional repression domain.</title>
        <authorList>
            <person name="Tiwari S.B."/>
            <person name="Hagen G."/>
            <person name="Guilfoyle T.J."/>
        </authorList>
    </citation>
    <scope>TRANSCRIPTIONAL REPRESSION DOMAIN</scope>
</reference>
<reference key="8">
    <citation type="journal article" date="2008" name="Science">
        <title>TOPLESS mediates auxin-dependent transcriptional repression during Arabidopsis embryogenesis.</title>
        <authorList>
            <person name="Szemenyei H."/>
            <person name="Hannon M."/>
            <person name="Long J.A."/>
        </authorList>
    </citation>
    <scope>INTERACTION WITH TPL</scope>
</reference>
<name>IAA8_ARATH</name>